<accession>Q0VQ74</accession>
<protein>
    <recommendedName>
        <fullName evidence="1">Na(+)/H(+) antiporter NhaB</fullName>
    </recommendedName>
    <alternativeName>
        <fullName evidence="1">Sodium/proton antiporter NhaB</fullName>
    </alternativeName>
</protein>
<gene>
    <name evidence="1" type="primary">nhaB</name>
    <name type="ordered locus">ABO_1226</name>
</gene>
<comment type="function">
    <text evidence="1">Na(+)/H(+) antiporter that extrudes sodium in exchange for external protons.</text>
</comment>
<comment type="catalytic activity">
    <reaction evidence="1">
        <text>2 Na(+)(in) + 3 H(+)(out) = 2 Na(+)(out) + 3 H(+)(in)</text>
        <dbReference type="Rhea" id="RHEA:29247"/>
        <dbReference type="ChEBI" id="CHEBI:15378"/>
        <dbReference type="ChEBI" id="CHEBI:29101"/>
    </reaction>
    <physiologicalReaction direction="left-to-right" evidence="1">
        <dbReference type="Rhea" id="RHEA:29248"/>
    </physiologicalReaction>
</comment>
<comment type="subcellular location">
    <subcellularLocation>
        <location evidence="1">Cell inner membrane</location>
        <topology evidence="1">Multi-pass membrane protein</topology>
    </subcellularLocation>
</comment>
<comment type="similarity">
    <text evidence="1">Belongs to the NhaB Na(+)/H(+) (TC 2.A.34) antiporter family.</text>
</comment>
<evidence type="ECO:0000255" key="1">
    <source>
        <dbReference type="HAMAP-Rule" id="MF_01599"/>
    </source>
</evidence>
<sequence>MSATLGRAFVQNFLGQAPAWYKYTIVAFLLINPLVALTLGPVTAGWLLLAEFIFTLAMALKCYPLQPGGLLAIEAVMIGLTSAETVLHKVVGNIEVMLLLIFMVAGIYFLKDLLLFMFTRILLGVKSKVTLSLLFCAAAALLSAFLDALTVTAVVIAVCTGFYGIYHKVASGKTFQQKHDHGDDTTVEELHREDLRRFRSFLRSLLMHAAVGTALGGVCTLVGEPQNLLIANKAGWEFGEFFLRMAPITLPVLVMGFFTCAFLEFSGSFGYGEDIPEKVRGIMRQYALEQDRKRTPQNRAALVIQAITAVWLVIGLATHAASVGLVGLTVIILATSFTGIIEEHRLGAAFEEALPFTALLTVFFAVVAVIADQQLFAPVIEYVLSLEKQVQGPAFYMANGILSAVSDNVFVATVYVDEVGQALLKNEIDRDTFDLLAVAINTGTNIPSVATPNGQAAFLFLLTSALAPLVRLSYGRMVIMALPYTIVMSITGLVMTATVLEPATDYLYENGWIQHHQVEDLQETPLIPGH</sequence>
<dbReference type="EMBL" id="AM286690">
    <property type="protein sequence ID" value="CAL16674.1"/>
    <property type="molecule type" value="Genomic_DNA"/>
</dbReference>
<dbReference type="RefSeq" id="WP_011588509.1">
    <property type="nucleotide sequence ID" value="NC_008260.1"/>
</dbReference>
<dbReference type="SMR" id="Q0VQ74"/>
<dbReference type="STRING" id="393595.ABO_1226"/>
<dbReference type="KEGG" id="abo:ABO_1226"/>
<dbReference type="eggNOG" id="COG3067">
    <property type="taxonomic scope" value="Bacteria"/>
</dbReference>
<dbReference type="HOGENOM" id="CLU_041110_0_0_6"/>
<dbReference type="OrthoDB" id="5288732at2"/>
<dbReference type="Proteomes" id="UP000008871">
    <property type="component" value="Chromosome"/>
</dbReference>
<dbReference type="GO" id="GO:0005886">
    <property type="term" value="C:plasma membrane"/>
    <property type="evidence" value="ECO:0007669"/>
    <property type="project" value="UniProtKB-SubCell"/>
</dbReference>
<dbReference type="GO" id="GO:0015385">
    <property type="term" value="F:sodium:proton antiporter activity"/>
    <property type="evidence" value="ECO:0007669"/>
    <property type="project" value="InterPro"/>
</dbReference>
<dbReference type="HAMAP" id="MF_01599">
    <property type="entry name" value="NhaB"/>
    <property type="match status" value="1"/>
</dbReference>
<dbReference type="InterPro" id="IPR004671">
    <property type="entry name" value="Na+/H+_antiporter_NhaB"/>
</dbReference>
<dbReference type="NCBIfam" id="NF007093">
    <property type="entry name" value="PRK09547.1"/>
    <property type="match status" value="1"/>
</dbReference>
<dbReference type="PANTHER" id="PTHR43302:SF1">
    <property type="entry name" value="NA(+)_H(+) ANTIPORTER NHAB"/>
    <property type="match status" value="1"/>
</dbReference>
<dbReference type="PANTHER" id="PTHR43302">
    <property type="entry name" value="TRANSPORTER ARSB-RELATED"/>
    <property type="match status" value="1"/>
</dbReference>
<dbReference type="Pfam" id="PF06450">
    <property type="entry name" value="NhaB"/>
    <property type="match status" value="1"/>
</dbReference>
<proteinExistence type="inferred from homology"/>
<reference key="1">
    <citation type="journal article" date="2006" name="Nat. Biotechnol.">
        <title>Genome sequence of the ubiquitous hydrocarbon-degrading marine bacterium Alcanivorax borkumensis.</title>
        <authorList>
            <person name="Schneiker S."/>
            <person name="Martins dos Santos V.A.P."/>
            <person name="Bartels D."/>
            <person name="Bekel T."/>
            <person name="Brecht M."/>
            <person name="Buhrmester J."/>
            <person name="Chernikova T.N."/>
            <person name="Denaro R."/>
            <person name="Ferrer M."/>
            <person name="Gertler C."/>
            <person name="Goesmann A."/>
            <person name="Golyshina O.V."/>
            <person name="Kaminski F."/>
            <person name="Khachane A.N."/>
            <person name="Lang S."/>
            <person name="Linke B."/>
            <person name="McHardy A.C."/>
            <person name="Meyer F."/>
            <person name="Nechitaylo T."/>
            <person name="Puehler A."/>
            <person name="Regenhardt D."/>
            <person name="Rupp O."/>
            <person name="Sabirova J.S."/>
            <person name="Selbitschka W."/>
            <person name="Yakimov M.M."/>
            <person name="Timmis K.N."/>
            <person name="Vorhoelter F.-J."/>
            <person name="Weidner S."/>
            <person name="Kaiser O."/>
            <person name="Golyshin P.N."/>
        </authorList>
    </citation>
    <scope>NUCLEOTIDE SEQUENCE [LARGE SCALE GENOMIC DNA]</scope>
    <source>
        <strain>ATCC 700651 / DSM 11573 / NCIMB 13689 / SK2</strain>
    </source>
</reference>
<organism>
    <name type="scientific">Alcanivorax borkumensis (strain ATCC 700651 / DSM 11573 / NCIMB 13689 / SK2)</name>
    <dbReference type="NCBI Taxonomy" id="393595"/>
    <lineage>
        <taxon>Bacteria</taxon>
        <taxon>Pseudomonadati</taxon>
        <taxon>Pseudomonadota</taxon>
        <taxon>Gammaproteobacteria</taxon>
        <taxon>Oceanospirillales</taxon>
        <taxon>Alcanivoracaceae</taxon>
        <taxon>Alcanivorax</taxon>
    </lineage>
</organism>
<name>NHAB_ALCBS</name>
<keyword id="KW-0050">Antiport</keyword>
<keyword id="KW-0997">Cell inner membrane</keyword>
<keyword id="KW-1003">Cell membrane</keyword>
<keyword id="KW-0406">Ion transport</keyword>
<keyword id="KW-0472">Membrane</keyword>
<keyword id="KW-1185">Reference proteome</keyword>
<keyword id="KW-0915">Sodium</keyword>
<keyword id="KW-0739">Sodium transport</keyword>
<keyword id="KW-0812">Transmembrane</keyword>
<keyword id="KW-1133">Transmembrane helix</keyword>
<keyword id="KW-0813">Transport</keyword>
<feature type="chain" id="PRO_0000333084" description="Na(+)/H(+) antiporter NhaB">
    <location>
        <begin position="1"/>
        <end position="530"/>
    </location>
</feature>
<feature type="transmembrane region" description="Helical" evidence="1">
    <location>
        <begin position="13"/>
        <end position="33"/>
    </location>
</feature>
<feature type="transmembrane region" description="Helical" evidence="1">
    <location>
        <begin position="67"/>
        <end position="87"/>
    </location>
</feature>
<feature type="transmembrane region" description="Helical" evidence="1">
    <location>
        <begin position="90"/>
        <end position="110"/>
    </location>
</feature>
<feature type="transmembrane region" description="Helical" evidence="1">
    <location>
        <begin position="138"/>
        <end position="158"/>
    </location>
</feature>
<feature type="transmembrane region" description="Helical" evidence="1">
    <location>
        <begin position="205"/>
        <end position="225"/>
    </location>
</feature>
<feature type="transmembrane region" description="Helical" evidence="1">
    <location>
        <begin position="245"/>
        <end position="265"/>
    </location>
</feature>
<feature type="transmembrane region" description="Helical" evidence="1">
    <location>
        <begin position="302"/>
        <end position="333"/>
    </location>
</feature>
<feature type="transmembrane region" description="Helical" evidence="1">
    <location>
        <begin position="350"/>
        <end position="370"/>
    </location>
</feature>
<feature type="transmembrane region" description="Helical" evidence="1">
    <location>
        <begin position="449"/>
        <end position="469"/>
    </location>
</feature>
<feature type="transmembrane region" description="Helical" evidence="1">
    <location>
        <begin position="477"/>
        <end position="497"/>
    </location>
</feature>